<accession>Q820X8</accession>
<gene>
    <name evidence="1" type="primary">dcd</name>
    <name type="ordered locus">TWT_787</name>
</gene>
<comment type="function">
    <text evidence="1">Bifunctional enzyme that catalyzes both the deamination of dCTP to dUTP and the hydrolysis of dUTP to dUMP without releasing the toxic dUTP intermediate.</text>
</comment>
<comment type="catalytic activity">
    <reaction evidence="1">
        <text>dCTP + 2 H2O = dUMP + NH4(+) + diphosphate</text>
        <dbReference type="Rhea" id="RHEA:19205"/>
        <dbReference type="ChEBI" id="CHEBI:15377"/>
        <dbReference type="ChEBI" id="CHEBI:28938"/>
        <dbReference type="ChEBI" id="CHEBI:33019"/>
        <dbReference type="ChEBI" id="CHEBI:61481"/>
        <dbReference type="ChEBI" id="CHEBI:246422"/>
        <dbReference type="EC" id="3.5.4.30"/>
    </reaction>
</comment>
<comment type="pathway">
    <text evidence="1">Pyrimidine metabolism; dUMP biosynthesis; dUMP from dCTP: step 1/1.</text>
</comment>
<comment type="subunit">
    <text evidence="1">Homotrimer.</text>
</comment>
<comment type="similarity">
    <text evidence="1">Belongs to the dCTP deaminase family.</text>
</comment>
<name>DCDB_TROWT</name>
<sequence length="196" mass="21571">MLLSDVDIQAALEDKLIQIDPFDPQMLQPASLDIRLSRYFRLFNNHTYAYIDPAEPQEALTRLVEVAENQAFVLHPGEFILGSTCETVSLSNDLAARLEGKSSLGRLGLLTHSTAGFIDPGFSGQITLELGNVATLPIKLWPGMKIGQLCFFQLSSPAKNAYGSPVCASRYQGQRGPTASLSHQHFYRARFTEIGL</sequence>
<evidence type="ECO:0000255" key="1">
    <source>
        <dbReference type="HAMAP-Rule" id="MF_00146"/>
    </source>
</evidence>
<keyword id="KW-0378">Hydrolase</keyword>
<keyword id="KW-0546">Nucleotide metabolism</keyword>
<keyword id="KW-0547">Nucleotide-binding</keyword>
<keyword id="KW-1185">Reference proteome</keyword>
<dbReference type="EC" id="3.5.4.30" evidence="1"/>
<dbReference type="EMBL" id="AE014184">
    <property type="protein sequence ID" value="AAO44884.1"/>
    <property type="molecule type" value="Genomic_DNA"/>
</dbReference>
<dbReference type="RefSeq" id="WP_011096733.1">
    <property type="nucleotide sequence ID" value="NC_004572.3"/>
</dbReference>
<dbReference type="SMR" id="Q820X8"/>
<dbReference type="STRING" id="203267.TWT_787"/>
<dbReference type="GeneID" id="67388577"/>
<dbReference type="KEGG" id="twh:TWT_787"/>
<dbReference type="eggNOG" id="COG0717">
    <property type="taxonomic scope" value="Bacteria"/>
</dbReference>
<dbReference type="HOGENOM" id="CLU_087476_2_0_11"/>
<dbReference type="OrthoDB" id="9780956at2"/>
<dbReference type="UniPathway" id="UPA00610">
    <property type="reaction ID" value="UER00667"/>
</dbReference>
<dbReference type="Proteomes" id="UP000002200">
    <property type="component" value="Chromosome"/>
</dbReference>
<dbReference type="GO" id="GO:0033973">
    <property type="term" value="F:dCTP deaminase (dUMP-forming) activity"/>
    <property type="evidence" value="ECO:0007669"/>
    <property type="project" value="UniProtKB-UniRule"/>
</dbReference>
<dbReference type="GO" id="GO:0008829">
    <property type="term" value="F:dCTP deaminase activity"/>
    <property type="evidence" value="ECO:0007669"/>
    <property type="project" value="InterPro"/>
</dbReference>
<dbReference type="GO" id="GO:0000166">
    <property type="term" value="F:nucleotide binding"/>
    <property type="evidence" value="ECO:0007669"/>
    <property type="project" value="UniProtKB-KW"/>
</dbReference>
<dbReference type="GO" id="GO:0006226">
    <property type="term" value="P:dUMP biosynthetic process"/>
    <property type="evidence" value="ECO:0007669"/>
    <property type="project" value="UniProtKB-UniRule"/>
</dbReference>
<dbReference type="GO" id="GO:0006229">
    <property type="term" value="P:dUTP biosynthetic process"/>
    <property type="evidence" value="ECO:0007669"/>
    <property type="project" value="InterPro"/>
</dbReference>
<dbReference type="GO" id="GO:0015949">
    <property type="term" value="P:nucleobase-containing small molecule interconversion"/>
    <property type="evidence" value="ECO:0007669"/>
    <property type="project" value="TreeGrafter"/>
</dbReference>
<dbReference type="CDD" id="cd07557">
    <property type="entry name" value="trimeric_dUTPase"/>
    <property type="match status" value="1"/>
</dbReference>
<dbReference type="FunFam" id="2.70.40.10:FF:000005">
    <property type="entry name" value="dCTP deaminase, dUMP-forming"/>
    <property type="match status" value="1"/>
</dbReference>
<dbReference type="Gene3D" id="2.70.40.10">
    <property type="match status" value="1"/>
</dbReference>
<dbReference type="HAMAP" id="MF_00146">
    <property type="entry name" value="dCTP_deaminase"/>
    <property type="match status" value="1"/>
</dbReference>
<dbReference type="InterPro" id="IPR011962">
    <property type="entry name" value="dCTP_deaminase"/>
</dbReference>
<dbReference type="InterPro" id="IPR036157">
    <property type="entry name" value="dUTPase-like_sf"/>
</dbReference>
<dbReference type="InterPro" id="IPR033704">
    <property type="entry name" value="dUTPase_trimeric"/>
</dbReference>
<dbReference type="NCBIfam" id="TIGR02274">
    <property type="entry name" value="dCTP_deam"/>
    <property type="match status" value="1"/>
</dbReference>
<dbReference type="PANTHER" id="PTHR42680">
    <property type="entry name" value="DCTP DEAMINASE"/>
    <property type="match status" value="1"/>
</dbReference>
<dbReference type="PANTHER" id="PTHR42680:SF3">
    <property type="entry name" value="DCTP DEAMINASE"/>
    <property type="match status" value="1"/>
</dbReference>
<dbReference type="Pfam" id="PF22769">
    <property type="entry name" value="DCD"/>
    <property type="match status" value="1"/>
</dbReference>
<dbReference type="SUPFAM" id="SSF51283">
    <property type="entry name" value="dUTPase-like"/>
    <property type="match status" value="1"/>
</dbReference>
<feature type="chain" id="PRO_0000156017" description="dCTP deaminase, dUMP-forming">
    <location>
        <begin position="1"/>
        <end position="196"/>
    </location>
</feature>
<feature type="active site" description="Proton donor/acceptor" evidence="1">
    <location>
        <position position="129"/>
    </location>
</feature>
<feature type="binding site" evidence="1">
    <location>
        <begin position="101"/>
        <end position="106"/>
    </location>
    <ligand>
        <name>dCTP</name>
        <dbReference type="ChEBI" id="CHEBI:61481"/>
    </ligand>
</feature>
<feature type="binding site" evidence="1">
    <location>
        <position position="119"/>
    </location>
    <ligand>
        <name>dCTP</name>
        <dbReference type="ChEBI" id="CHEBI:61481"/>
    </ligand>
</feature>
<feature type="binding site" evidence="1">
    <location>
        <begin position="127"/>
        <end position="129"/>
    </location>
    <ligand>
        <name>dCTP</name>
        <dbReference type="ChEBI" id="CHEBI:61481"/>
    </ligand>
</feature>
<feature type="binding site" evidence="1">
    <location>
        <position position="148"/>
    </location>
    <ligand>
        <name>dCTP</name>
        <dbReference type="ChEBI" id="CHEBI:61481"/>
    </ligand>
</feature>
<feature type="binding site" evidence="1">
    <location>
        <position position="162"/>
    </location>
    <ligand>
        <name>dCTP</name>
        <dbReference type="ChEBI" id="CHEBI:61481"/>
    </ligand>
</feature>
<feature type="binding site" evidence="1">
    <location>
        <position position="174"/>
    </location>
    <ligand>
        <name>dCTP</name>
        <dbReference type="ChEBI" id="CHEBI:61481"/>
    </ligand>
</feature>
<feature type="site" description="Important for bifunctional activity" evidence="1">
    <location>
        <begin position="116"/>
        <end position="117"/>
    </location>
</feature>
<reference key="1">
    <citation type="journal article" date="2003" name="Genome Res.">
        <title>Tropheryma whipplei twist: a human pathogenic Actinobacteria with a reduced genome.</title>
        <authorList>
            <person name="Raoult D."/>
            <person name="Ogata H."/>
            <person name="Audic S."/>
            <person name="Robert C."/>
            <person name="Suhre K."/>
            <person name="Drancourt M."/>
            <person name="Claverie J.-M."/>
        </authorList>
    </citation>
    <scope>NUCLEOTIDE SEQUENCE [LARGE SCALE GENOMIC DNA]</scope>
    <source>
        <strain>Twist</strain>
    </source>
</reference>
<proteinExistence type="inferred from homology"/>
<organism>
    <name type="scientific">Tropheryma whipplei (strain Twist)</name>
    <name type="common">Whipple's bacillus</name>
    <dbReference type="NCBI Taxonomy" id="203267"/>
    <lineage>
        <taxon>Bacteria</taxon>
        <taxon>Bacillati</taxon>
        <taxon>Actinomycetota</taxon>
        <taxon>Actinomycetes</taxon>
        <taxon>Micrococcales</taxon>
        <taxon>Tropherymataceae</taxon>
        <taxon>Tropheryma</taxon>
    </lineage>
</organism>
<protein>
    <recommendedName>
        <fullName evidence="1">dCTP deaminase, dUMP-forming</fullName>
        <ecNumber evidence="1">3.5.4.30</ecNumber>
    </recommendedName>
    <alternativeName>
        <fullName evidence="1">Bifunctional dCTP deaminase:dUTPase</fullName>
    </alternativeName>
    <alternativeName>
        <fullName evidence="1">DCD-DUT</fullName>
    </alternativeName>
</protein>